<comment type="function">
    <text evidence="1">DNA-dependent RNA polymerase catalyzes the transcription of DNA into RNA using the four ribonucleoside triphosphates as substrates.</text>
</comment>
<comment type="catalytic activity">
    <reaction evidence="1">
        <text>RNA(n) + a ribonucleoside 5'-triphosphate = RNA(n+1) + diphosphate</text>
        <dbReference type="Rhea" id="RHEA:21248"/>
        <dbReference type="Rhea" id="RHEA-COMP:14527"/>
        <dbReference type="Rhea" id="RHEA-COMP:17342"/>
        <dbReference type="ChEBI" id="CHEBI:33019"/>
        <dbReference type="ChEBI" id="CHEBI:61557"/>
        <dbReference type="ChEBI" id="CHEBI:140395"/>
        <dbReference type="EC" id="2.7.7.6"/>
    </reaction>
</comment>
<comment type="cofactor">
    <cofactor evidence="1">
        <name>Mg(2+)</name>
        <dbReference type="ChEBI" id="CHEBI:18420"/>
    </cofactor>
    <text evidence="1">Binds 1 Mg(2+) ion per subunit.</text>
</comment>
<comment type="cofactor">
    <cofactor evidence="1">
        <name>Zn(2+)</name>
        <dbReference type="ChEBI" id="CHEBI:29105"/>
    </cofactor>
    <text evidence="1">Binds 2 Zn(2+) ions per subunit.</text>
</comment>
<comment type="subunit">
    <text evidence="1">The RNAP catalytic core consists of 2 alpha, 1 beta, 1 beta' and 1 omega subunit. When a sigma factor is associated with the core the holoenzyme is formed, which can initiate transcription.</text>
</comment>
<comment type="similarity">
    <text evidence="1">Belongs to the RNA polymerase beta' chain family.</text>
</comment>
<comment type="sequence caution" evidence="2">
    <conflict type="erroneous initiation">
        <sequence resource="EMBL-CDS" id="ABG16553"/>
    </conflict>
    <text>Extended N-terminus.</text>
</comment>
<sequence>MKDLLKFLKAQTKTEEFDAIKIALASPDMIRSWSFGEVKKPETINYRTFKPERDGLFCARIFGPVKDYECLCGKYKRLKHRGVICEKCGVEVTQTKVRRERMGHIELASPTAHIWFLKSLPSRIGLLLDMPLRDIERVLYFESYVVIEGGMTNLERRQILTEEQYLDALEEFGDEFDAKMGAEAIQALLKNMDLEAECEILREELNETNSETKRKKLTKRIKLLEAFVQSGNKPEWMILTVLPVLPPDLRPLVPLDGGRFATSDLNDLYRRVINRNNRLKRLLDLAAPDIIVRNEKRMLQEAVDALLDNGRRGRAITGSNKRPLKSLADMIKGKQGRFRQNLLGKRVDYSGRSVITVGPYLRLHQCGLPKKMALELFKPFIYGKLELRGLATTIKAAKKMVEREEAVVWDILDEVIREHPVLLNRAPTLHRLGIQAFEPVLIEGKAIQLHPLVCAAYNADFDGDQMAVHVPLTLEAQLEARALMMSTNNILSPANGEPIIVPSQDVVLGLYYMTRDCVNAKGEGMVLTGPKEAERIYRAGLASLHARVKVRITEEIRNTEGESITRTSIIDTTVGRAILWMIVPQGLPYSIVNQPLGKKAISKMLNTCYRILGLKPTVIFADQIMYTGFAYAARSGASVGIDDMVIPEAKAGIIEEAETEVAEIQEQFQSGLVTAGERYNKVIDIWAAANERVAKAMMDNLSVEDVVNRDGVVEQQVSFNSIFMMADSGARGSAAQIRQLAGMRGLMAKPDGSIIETPITANFREGLNVLQYFISTHGARKGLADTALKTANSGYLTRRLVDVAQDLVVTEDDCGTHNGIVMTPVIEGGDVKEPLRDRVLGRVTAEEVIKPGSADILVPRNTLLDEKWCDLLEENSVDSVKVRSVVSCETDFGVCANCYGRDLARGHIINKGEAVGVIAAQSIGEPGTQLTMRTFHIGGAASRAAAESSIQVKNKGSLKLSNVKFVTNAAGKLVITSRNTELKLIDEFGRTKESYKVPYGAVMAKGDGAEVQGGETVANWDPHIMPVVTEVSGFIRFADMVDGQTITRQTDELTGLSSLVVLDSAERTGSGKDLRPALKIVDAKGNDVLIPGTDMPAQYFLPGKAIVQLEDGIQIGAGDTLARIPQESSGTKDITGGLPRVADLFEARRPKEPAILAEISGIISFGKETKGKRRLVISPLDGSDAYEEMIPKWRQLNVFEGEVVERGDVVSDGPESPHDILRLRGVHAVTRYITNEVQEVYRLQGVKINDKHIEVIVRQMLRKGTIVDAGSTDFLEGEQAEMSRVKIANRKLAAEGKIEATFTRDLLGITKASLATESFISAASFQETTRVLTEAAVAGKRDELRGLKENVIVGRLIPAGTGYAYHQDRMRRKAQGEAPVVPQVSADEATANLAELLNAGFGNNKG</sequence>
<keyword id="KW-0240">DNA-directed RNA polymerase</keyword>
<keyword id="KW-0460">Magnesium</keyword>
<keyword id="KW-0479">Metal-binding</keyword>
<keyword id="KW-0548">Nucleotidyltransferase</keyword>
<keyword id="KW-0804">Transcription</keyword>
<keyword id="KW-0808">Transferase</keyword>
<keyword id="KW-0862">Zinc</keyword>
<dbReference type="EC" id="2.7.7.6" evidence="1"/>
<dbReference type="EMBL" id="CP000305">
    <property type="protein sequence ID" value="ABG16553.1"/>
    <property type="status" value="ALT_INIT"/>
    <property type="molecule type" value="Genomic_DNA"/>
</dbReference>
<dbReference type="EMBL" id="ACNQ01000004">
    <property type="protein sequence ID" value="EEO78471.1"/>
    <property type="molecule type" value="Genomic_DNA"/>
</dbReference>
<dbReference type="RefSeq" id="WP_002210677.1">
    <property type="nucleotide sequence ID" value="NZ_ACNQ01000004.1"/>
</dbReference>
<dbReference type="SMR" id="Q1CN77"/>
<dbReference type="GeneID" id="96663777"/>
<dbReference type="KEGG" id="ypn:YPN_0220"/>
<dbReference type="HOGENOM" id="CLU_000524_3_1_6"/>
<dbReference type="Proteomes" id="UP000008936">
    <property type="component" value="Chromosome"/>
</dbReference>
<dbReference type="GO" id="GO:0000428">
    <property type="term" value="C:DNA-directed RNA polymerase complex"/>
    <property type="evidence" value="ECO:0007669"/>
    <property type="project" value="UniProtKB-KW"/>
</dbReference>
<dbReference type="GO" id="GO:0003677">
    <property type="term" value="F:DNA binding"/>
    <property type="evidence" value="ECO:0007669"/>
    <property type="project" value="UniProtKB-UniRule"/>
</dbReference>
<dbReference type="GO" id="GO:0003899">
    <property type="term" value="F:DNA-directed RNA polymerase activity"/>
    <property type="evidence" value="ECO:0007669"/>
    <property type="project" value="UniProtKB-UniRule"/>
</dbReference>
<dbReference type="GO" id="GO:0000287">
    <property type="term" value="F:magnesium ion binding"/>
    <property type="evidence" value="ECO:0007669"/>
    <property type="project" value="UniProtKB-UniRule"/>
</dbReference>
<dbReference type="GO" id="GO:0008270">
    <property type="term" value="F:zinc ion binding"/>
    <property type="evidence" value="ECO:0007669"/>
    <property type="project" value="UniProtKB-UniRule"/>
</dbReference>
<dbReference type="GO" id="GO:0006351">
    <property type="term" value="P:DNA-templated transcription"/>
    <property type="evidence" value="ECO:0007669"/>
    <property type="project" value="UniProtKB-UniRule"/>
</dbReference>
<dbReference type="CDD" id="cd02655">
    <property type="entry name" value="RNAP_beta'_C"/>
    <property type="match status" value="1"/>
</dbReference>
<dbReference type="CDD" id="cd01609">
    <property type="entry name" value="RNAP_beta'_N"/>
    <property type="match status" value="1"/>
</dbReference>
<dbReference type="FunFam" id="1.10.132.30:FF:000003">
    <property type="entry name" value="DNA-directed RNA polymerase subunit beta"/>
    <property type="match status" value="1"/>
</dbReference>
<dbReference type="FunFam" id="1.10.150.390:FF:000002">
    <property type="entry name" value="DNA-directed RNA polymerase subunit beta"/>
    <property type="match status" value="1"/>
</dbReference>
<dbReference type="FunFam" id="1.10.274.100:FF:000002">
    <property type="entry name" value="DNA-directed RNA polymerase subunit beta"/>
    <property type="match status" value="1"/>
</dbReference>
<dbReference type="FunFam" id="1.10.40.90:FF:000001">
    <property type="entry name" value="DNA-directed RNA polymerase subunit beta"/>
    <property type="match status" value="1"/>
</dbReference>
<dbReference type="FunFam" id="2.40.50.100:FF:000012">
    <property type="entry name" value="DNA-directed RNA polymerase subunit beta"/>
    <property type="match status" value="1"/>
</dbReference>
<dbReference type="FunFam" id="2.40.50.100:FF:000016">
    <property type="entry name" value="DNA-directed RNA polymerase subunit beta"/>
    <property type="match status" value="1"/>
</dbReference>
<dbReference type="FunFam" id="2.40.50.100:FF:000019">
    <property type="entry name" value="DNA-directed RNA polymerase subunit beta"/>
    <property type="match status" value="1"/>
</dbReference>
<dbReference type="FunFam" id="4.10.860.120:FF:000001">
    <property type="entry name" value="DNA-directed RNA polymerase subunit beta"/>
    <property type="match status" value="1"/>
</dbReference>
<dbReference type="Gene3D" id="1.10.132.30">
    <property type="match status" value="1"/>
</dbReference>
<dbReference type="Gene3D" id="1.10.150.390">
    <property type="match status" value="1"/>
</dbReference>
<dbReference type="Gene3D" id="1.10.1790.20">
    <property type="match status" value="1"/>
</dbReference>
<dbReference type="Gene3D" id="1.10.40.90">
    <property type="match status" value="1"/>
</dbReference>
<dbReference type="Gene3D" id="2.40.40.20">
    <property type="match status" value="1"/>
</dbReference>
<dbReference type="Gene3D" id="2.40.50.100">
    <property type="match status" value="3"/>
</dbReference>
<dbReference type="Gene3D" id="4.10.860.120">
    <property type="entry name" value="RNA polymerase II, clamp domain"/>
    <property type="match status" value="1"/>
</dbReference>
<dbReference type="Gene3D" id="1.10.274.100">
    <property type="entry name" value="RNA polymerase Rpb1, domain 3"/>
    <property type="match status" value="1"/>
</dbReference>
<dbReference type="HAMAP" id="MF_01322">
    <property type="entry name" value="RNApol_bact_RpoC"/>
    <property type="match status" value="1"/>
</dbReference>
<dbReference type="InterPro" id="IPR045867">
    <property type="entry name" value="DNA-dir_RpoC_beta_prime"/>
</dbReference>
<dbReference type="InterPro" id="IPR012754">
    <property type="entry name" value="DNA-dir_RpoC_beta_prime_bact"/>
</dbReference>
<dbReference type="InterPro" id="IPR000722">
    <property type="entry name" value="RNA_pol_asu"/>
</dbReference>
<dbReference type="InterPro" id="IPR006592">
    <property type="entry name" value="RNA_pol_N"/>
</dbReference>
<dbReference type="InterPro" id="IPR007080">
    <property type="entry name" value="RNA_pol_Rpb1_1"/>
</dbReference>
<dbReference type="InterPro" id="IPR007066">
    <property type="entry name" value="RNA_pol_Rpb1_3"/>
</dbReference>
<dbReference type="InterPro" id="IPR042102">
    <property type="entry name" value="RNA_pol_Rpb1_3_sf"/>
</dbReference>
<dbReference type="InterPro" id="IPR007083">
    <property type="entry name" value="RNA_pol_Rpb1_4"/>
</dbReference>
<dbReference type="InterPro" id="IPR007081">
    <property type="entry name" value="RNA_pol_Rpb1_5"/>
</dbReference>
<dbReference type="InterPro" id="IPR044893">
    <property type="entry name" value="RNA_pol_Rpb1_clamp_domain"/>
</dbReference>
<dbReference type="InterPro" id="IPR038120">
    <property type="entry name" value="Rpb1_funnel_sf"/>
</dbReference>
<dbReference type="NCBIfam" id="TIGR02386">
    <property type="entry name" value="rpoC_TIGR"/>
    <property type="match status" value="1"/>
</dbReference>
<dbReference type="PANTHER" id="PTHR19376">
    <property type="entry name" value="DNA-DIRECTED RNA POLYMERASE"/>
    <property type="match status" value="1"/>
</dbReference>
<dbReference type="PANTHER" id="PTHR19376:SF54">
    <property type="entry name" value="DNA-DIRECTED RNA POLYMERASE SUBUNIT BETA"/>
    <property type="match status" value="1"/>
</dbReference>
<dbReference type="Pfam" id="PF04997">
    <property type="entry name" value="RNA_pol_Rpb1_1"/>
    <property type="match status" value="1"/>
</dbReference>
<dbReference type="Pfam" id="PF00623">
    <property type="entry name" value="RNA_pol_Rpb1_2"/>
    <property type="match status" value="2"/>
</dbReference>
<dbReference type="Pfam" id="PF04983">
    <property type="entry name" value="RNA_pol_Rpb1_3"/>
    <property type="match status" value="1"/>
</dbReference>
<dbReference type="Pfam" id="PF05000">
    <property type="entry name" value="RNA_pol_Rpb1_4"/>
    <property type="match status" value="1"/>
</dbReference>
<dbReference type="Pfam" id="PF04998">
    <property type="entry name" value="RNA_pol_Rpb1_5"/>
    <property type="match status" value="1"/>
</dbReference>
<dbReference type="SMART" id="SM00663">
    <property type="entry name" value="RPOLA_N"/>
    <property type="match status" value="1"/>
</dbReference>
<dbReference type="SUPFAM" id="SSF64484">
    <property type="entry name" value="beta and beta-prime subunits of DNA dependent RNA-polymerase"/>
    <property type="match status" value="1"/>
</dbReference>
<evidence type="ECO:0000255" key="1">
    <source>
        <dbReference type="HAMAP-Rule" id="MF_01322"/>
    </source>
</evidence>
<evidence type="ECO:0000305" key="2"/>
<protein>
    <recommendedName>
        <fullName evidence="1">DNA-directed RNA polymerase subunit beta'</fullName>
        <shortName evidence="1">RNAP subunit beta'</shortName>
        <ecNumber evidence="1">2.7.7.6</ecNumber>
    </recommendedName>
    <alternativeName>
        <fullName evidence="1">RNA polymerase subunit beta'</fullName>
    </alternativeName>
    <alternativeName>
        <fullName evidence="1">Transcriptase subunit beta'</fullName>
    </alternativeName>
</protein>
<proteinExistence type="inferred from homology"/>
<gene>
    <name evidence="1" type="primary">rpoC</name>
    <name type="ordered locus">YPN_0220</name>
    <name type="ORF">YP516_0197</name>
</gene>
<name>RPOC_YERPN</name>
<feature type="chain" id="PRO_0000353464" description="DNA-directed RNA polymerase subunit beta'">
    <location>
        <begin position="1"/>
        <end position="1406"/>
    </location>
</feature>
<feature type="binding site" evidence="1">
    <location>
        <position position="70"/>
    </location>
    <ligand>
        <name>Zn(2+)</name>
        <dbReference type="ChEBI" id="CHEBI:29105"/>
        <label>1</label>
    </ligand>
</feature>
<feature type="binding site" evidence="1">
    <location>
        <position position="72"/>
    </location>
    <ligand>
        <name>Zn(2+)</name>
        <dbReference type="ChEBI" id="CHEBI:29105"/>
        <label>1</label>
    </ligand>
</feature>
<feature type="binding site" evidence="1">
    <location>
        <position position="85"/>
    </location>
    <ligand>
        <name>Zn(2+)</name>
        <dbReference type="ChEBI" id="CHEBI:29105"/>
        <label>1</label>
    </ligand>
</feature>
<feature type="binding site" evidence="1">
    <location>
        <position position="88"/>
    </location>
    <ligand>
        <name>Zn(2+)</name>
        <dbReference type="ChEBI" id="CHEBI:29105"/>
        <label>1</label>
    </ligand>
</feature>
<feature type="binding site" evidence="1">
    <location>
        <position position="460"/>
    </location>
    <ligand>
        <name>Mg(2+)</name>
        <dbReference type="ChEBI" id="CHEBI:18420"/>
    </ligand>
</feature>
<feature type="binding site" evidence="1">
    <location>
        <position position="462"/>
    </location>
    <ligand>
        <name>Mg(2+)</name>
        <dbReference type="ChEBI" id="CHEBI:18420"/>
    </ligand>
</feature>
<feature type="binding site" evidence="1">
    <location>
        <position position="464"/>
    </location>
    <ligand>
        <name>Mg(2+)</name>
        <dbReference type="ChEBI" id="CHEBI:18420"/>
    </ligand>
</feature>
<feature type="binding site" evidence="1">
    <location>
        <position position="814"/>
    </location>
    <ligand>
        <name>Zn(2+)</name>
        <dbReference type="ChEBI" id="CHEBI:29105"/>
        <label>2</label>
    </ligand>
</feature>
<feature type="binding site" evidence="1">
    <location>
        <position position="888"/>
    </location>
    <ligand>
        <name>Zn(2+)</name>
        <dbReference type="ChEBI" id="CHEBI:29105"/>
        <label>2</label>
    </ligand>
</feature>
<feature type="binding site" evidence="1">
    <location>
        <position position="895"/>
    </location>
    <ligand>
        <name>Zn(2+)</name>
        <dbReference type="ChEBI" id="CHEBI:29105"/>
        <label>2</label>
    </ligand>
</feature>
<feature type="binding site" evidence="1">
    <location>
        <position position="898"/>
    </location>
    <ligand>
        <name>Zn(2+)</name>
        <dbReference type="ChEBI" id="CHEBI:29105"/>
        <label>2</label>
    </ligand>
</feature>
<accession>Q1CN77</accession>
<accession>C4GNE7</accession>
<organism>
    <name type="scientific">Yersinia pestis bv. Antiqua (strain Nepal516)</name>
    <dbReference type="NCBI Taxonomy" id="377628"/>
    <lineage>
        <taxon>Bacteria</taxon>
        <taxon>Pseudomonadati</taxon>
        <taxon>Pseudomonadota</taxon>
        <taxon>Gammaproteobacteria</taxon>
        <taxon>Enterobacterales</taxon>
        <taxon>Yersiniaceae</taxon>
        <taxon>Yersinia</taxon>
    </lineage>
</organism>
<reference key="1">
    <citation type="journal article" date="2006" name="J. Bacteriol.">
        <title>Complete genome sequence of Yersinia pestis strains Antiqua and Nepal516: evidence of gene reduction in an emerging pathogen.</title>
        <authorList>
            <person name="Chain P.S.G."/>
            <person name="Hu P."/>
            <person name="Malfatti S.A."/>
            <person name="Radnedge L."/>
            <person name="Larimer F."/>
            <person name="Vergez L.M."/>
            <person name="Worsham P."/>
            <person name="Chu M.C."/>
            <person name="Andersen G.L."/>
        </authorList>
    </citation>
    <scope>NUCLEOTIDE SEQUENCE [LARGE SCALE GENOMIC DNA]</scope>
    <source>
        <strain>Nepal516</strain>
    </source>
</reference>
<reference key="2">
    <citation type="submission" date="2009-04" db="EMBL/GenBank/DDBJ databases">
        <title>Yersinia pestis Nepal516A whole genome shotgun sequencing project.</title>
        <authorList>
            <person name="Plunkett G. III"/>
            <person name="Anderson B.D."/>
            <person name="Baumler D.J."/>
            <person name="Burland V."/>
            <person name="Cabot E.L."/>
            <person name="Glasner J.D."/>
            <person name="Mau B."/>
            <person name="Neeno-Eckwall E."/>
            <person name="Perna N.T."/>
            <person name="Munk A.C."/>
            <person name="Tapia R."/>
            <person name="Green L.D."/>
            <person name="Rogers Y.C."/>
            <person name="Detter J.C."/>
            <person name="Bruce D.C."/>
            <person name="Brettin T.S."/>
        </authorList>
    </citation>
    <scope>NUCLEOTIDE SEQUENCE [LARGE SCALE GENOMIC DNA]</scope>
    <source>
        <strain>Nepal516</strain>
    </source>
</reference>